<comment type="function">
    <text>Binding to cells via a high affinity receptor, laminin is thought to mediate the attachment, migration and organization of cells into tissues during embryonic development by interacting with other extracellular matrix components.</text>
</comment>
<comment type="function">
    <text>Laminin-5 is thought to be involved in (1) cell adhesion via integrin alpha-3/beta-1 in focal adhesion and integrin alpha-6/beta-4 in hemidesmosomes, (2) signal transduction via tyrosine phosphorylation of pp125-FAK and p80, (3) differentiation of keratinocytes.</text>
</comment>
<comment type="subunit">
    <text>Laminin is a complex glycoprotein, consisting of three different polypeptide chains (alpha, beta, gamma), which are bound to each other by disulfide bonds into a cross-shaped molecule comprising one long and three short arms with globules at each end. Alpha-3 is a subunit of laminin-5 (laminin-332 or epiligrin/kalinin/nicein), laminin-6 (laminin-311 or K-laminin) and laminin-7 (laminin-321 or KS-laminin).</text>
</comment>
<comment type="subcellular location">
    <subcellularLocation>
        <location>Secreted</location>
        <location>Extracellular space</location>
        <location>Extracellular matrix</location>
        <location>Basement membrane</location>
    </subcellularLocation>
    <text>Major component.</text>
</comment>
<comment type="alternative products">
    <event type="alternative splicing"/>
    <isoform>
        <id>Q16787-2</id>
        <name>2</name>
        <name>B</name>
        <sequence type="displayed"/>
    </isoform>
    <isoform>
        <id>Q16787-1</id>
        <name>1</name>
        <name>A</name>
        <sequence type="described" ref="VSP_035738 VSP_035739"/>
    </isoform>
    <isoform>
        <id>Q16787-3</id>
        <name>3</name>
        <sequence type="described" ref="VSP_043487"/>
    </isoform>
    <isoform>
        <id>Q16787-4</id>
        <name>4</name>
        <sequence type="described" ref="VSP_047079 VSP_047080 VSP_043487"/>
    </isoform>
</comment>
<comment type="tissue specificity">
    <text>Skin; respiratory, urinary, and digestive epithelia and in other specialized tissues with prominent secretory or protective functions. Epithelial basement membrane, and epithelial cell tongue that migrates into a wound bed. A differential and focal expression of the subunit alpha-3 is observed in the CNS.</text>
</comment>
<comment type="induction">
    <text>Laminin-5 is up-regulated in wound sites of human skin.</text>
</comment>
<comment type="domain">
    <text>The alpha-helical domains I and II are thought to interact with other laminin chains to form a coiled coil structure.</text>
</comment>
<comment type="domain">
    <text>Domain G is globular.</text>
</comment>
<comment type="disease" evidence="7">
    <disease id="DI-06337">
        <name>Epidermolysis bullosa, junctional 2A, intermediate</name>
        <acronym>JEB2A</acronym>
        <description>A form of epidermolysis bullosa, a genodermatosis characterized by recurrent blistering, fragility of the skin and mucosal epithelia, and erosions caused by minor mechanical trauma. JEB2A is an autosomal recessive, intermediate form in which blistering lesions occur between the epidermis and the dermis at the lamina lucida level of the basement membrane zone. In intermediate forms of junctional epidermolysis bullosa, blistering does not lead to the formation of chronic granulation tissue and does not affect the lifespan of affected individuals. Nail dystrophy and dental enamel defects are present. Scarring or non-scarring alopecia and diffuse hair loss may occur.</description>
        <dbReference type="MIM" id="619783"/>
    </disease>
    <text>The disease is caused by variants affecting the gene represented in this entry.</text>
</comment>
<comment type="disease" evidence="11 13 14">
    <disease id="DI-06338">
        <name>Epidermolysis bullosa, junctional 2B, severe</name>
        <acronym>JEB2B</acronym>
        <description>A form of epidermolysis bullosa, a genodermatosis characterized by recurrent blistering, fragility of the skin and mucosal epithelia, and erosions caused by minor mechanical trauma. JEB2B is an autosomal recessive form in which blistering lesions occur between the epidermis and the dermis at the lamina lucida level of the basement membrane zone. It belongs to the severe spectrum of junctional epidermolysis bullosa (previously known as generalized severe or Herlitz type), characterized by onset of blistering over large regions of the body at birth or in early infancy. Blistering also affects the mucous membranes, such as the moist lining of the mouth and digestive tract, which can make it difficult to eat and digest food. The extensive blistering leads to scarring and the formation of red, bumpy patches called granulation tissue. Other complications can include fusion of the fingers and toes, abnormalities of the fingernails and toenails, joint deformities, dental enamel defects, and alopecia. Severe, junctional forms are associated with death in the first 6 to 24 months of life.</description>
        <dbReference type="MIM" id="619784"/>
    </disease>
    <text>The disease is caused by variants affecting the gene represented in this entry.</text>
</comment>
<comment type="disease" evidence="8">
    <disease id="DI-01879">
        <name>Epidermolysis bullosa, junctional 2C, laryngoonychocutaneous</name>
        <acronym>JEB2C</acronym>
        <description>A form of epidermolysis bullosa, a genodermatosis characterized by recurrent blistering, fragility of the skin and mucosal epithelia, and erosions caused by minor mechanical trauma. JEB2C is an autosomal recessive, severe form in which blistering lesions occur between the epidermis and the dermis at the lamina lucida level of the basement membrane zone. JEB2C manifestations appear in early infancy and include hoarse cry, skin ulceration, nail dystrophy with recurrent loss of toenails and fingernails, and conjunctival scarring. Some patients have amelogenesis imperfecta. Death in childhood is common.</description>
        <dbReference type="MIM" id="245660"/>
    </disease>
    <text>The disease is caused by variants affecting the gene represented in this entry.</text>
</comment>
<accession>Q16787</accession>
<accession>B0YJ33</accession>
<accession>Q13679</accession>
<accession>Q13680</accession>
<accession>Q6VU67</accession>
<accession>Q6VU68</accession>
<accession>Q6VU69</accession>
<accession>Q76E14</accession>
<accession>Q96TG0</accession>
<proteinExistence type="evidence at protein level"/>
<gene>
    <name type="primary">LAMA3</name>
    <name type="synonym">LAMNA</name>
</gene>
<name>LAMA3_HUMAN</name>
<organism>
    <name type="scientific">Homo sapiens</name>
    <name type="common">Human</name>
    <dbReference type="NCBI Taxonomy" id="9606"/>
    <lineage>
        <taxon>Eukaryota</taxon>
        <taxon>Metazoa</taxon>
        <taxon>Chordata</taxon>
        <taxon>Craniata</taxon>
        <taxon>Vertebrata</taxon>
        <taxon>Euteleostomi</taxon>
        <taxon>Mammalia</taxon>
        <taxon>Eutheria</taxon>
        <taxon>Euarchontoglires</taxon>
        <taxon>Primates</taxon>
        <taxon>Haplorrhini</taxon>
        <taxon>Catarrhini</taxon>
        <taxon>Hominidae</taxon>
        <taxon>Homo</taxon>
    </lineage>
</organism>
<protein>
    <recommendedName>
        <fullName>Laminin subunit alpha-3</fullName>
    </recommendedName>
    <alternativeName>
        <fullName>Epiligrin 170 kDa subunit</fullName>
        <shortName>E170</shortName>
    </alternativeName>
    <alternativeName>
        <fullName>Epiligrin subunit alpha</fullName>
    </alternativeName>
    <alternativeName>
        <fullName>Kalinin subunit alpha</fullName>
    </alternativeName>
    <alternativeName>
        <fullName>Laminin-5 subunit alpha</fullName>
    </alternativeName>
    <alternativeName>
        <fullName>Laminin-6 subunit alpha</fullName>
    </alternativeName>
    <alternativeName>
        <fullName>Laminin-7 subunit alpha</fullName>
    </alternativeName>
    <alternativeName>
        <fullName>Nicein subunit alpha</fullName>
    </alternativeName>
</protein>
<reference key="1">
    <citation type="journal article" date="2003" name="Hum. Mol. Genet.">
        <title>An unusual N-terminal deletion of the laminin alpha3a isoform leads to the chronic granulation tissue disorder laryngo-onycho-cutaneous syndrome.</title>
        <authorList>
            <person name="McLean W.H.I."/>
            <person name="Irvine A.D."/>
            <person name="Hamill K.J."/>
            <person name="Whittock N.V."/>
            <person name="Coleman-Campbell C.M."/>
            <person name="Mellerio J.E."/>
            <person name="Ashton G.S."/>
            <person name="Dopping-Hepenstal P.J.H."/>
            <person name="Eady R.A.J."/>
            <person name="Jamil T."/>
            <person name="Phillips R.J."/>
            <person name="Shabbir S.G."/>
            <person name="Haroon T.S."/>
            <person name="Khurshid K."/>
            <person name="Moore J.E."/>
            <person name="Page B."/>
            <person name="Darling J."/>
            <person name="Atherton D.J."/>
            <person name="Van Steensel M.A.M."/>
            <person name="Munro C.S."/>
            <person name="Smith F.J.D."/>
            <person name="McGrath J.A."/>
        </authorList>
    </citation>
    <scope>NUCLEOTIDE SEQUENCE [MRNA] (ISOFORMS 2; 3 AND 4)</scope>
    <scope>INVOLVEMENT IN JEB2C</scope>
    <scope>VARIANT SER-2834</scope>
</reference>
<reference key="2">
    <citation type="journal article" date="2004" name="J. Biol. Chem.">
        <title>Characterization of laminin 5B and NH2-terminal proteolytic fragment of its alpha3B chain: promotion of cellular adhesion, migration, and proliferation.</title>
        <authorList>
            <person name="Kariya Y."/>
            <person name="Yasuda C."/>
            <person name="Nakashima Y."/>
            <person name="Ishida K."/>
            <person name="Tsubota Y."/>
            <person name="Miyazaki K."/>
        </authorList>
    </citation>
    <scope>NUCLEOTIDE SEQUENCE [GENOMIC DNA] (ISOFORM 2)</scope>
</reference>
<reference key="3">
    <citation type="submission" date="2007-02" db="EMBL/GenBank/DDBJ databases">
        <authorList>
            <person name="Stockwell T.B."/>
            <person name="Busam D.A."/>
            <person name="Ferriera S.M."/>
            <person name="Brownley A.N."/>
            <person name="Strausberg R.L."/>
            <person name="Kirkness E.F."/>
            <person name="Rogers Y.-H."/>
            <person name="Levy S."/>
        </authorList>
    </citation>
    <scope>NUCLEOTIDE SEQUENCE [GENOMIC DNA]</scope>
</reference>
<reference key="4">
    <citation type="journal article" date="2005" name="Nature">
        <title>DNA sequence and analysis of human chromosome 18.</title>
        <authorList>
            <person name="Nusbaum C."/>
            <person name="Zody M.C."/>
            <person name="Borowsky M.L."/>
            <person name="Kamal M."/>
            <person name="Kodira C.D."/>
            <person name="Taylor T.D."/>
            <person name="Whittaker C.A."/>
            <person name="Chang J.L."/>
            <person name="Cuomo C.A."/>
            <person name="Dewar K."/>
            <person name="FitzGerald M.G."/>
            <person name="Yang X."/>
            <person name="Abouelleil A."/>
            <person name="Allen N.R."/>
            <person name="Anderson S."/>
            <person name="Bloom T."/>
            <person name="Bugalter B."/>
            <person name="Butler J."/>
            <person name="Cook A."/>
            <person name="DeCaprio D."/>
            <person name="Engels R."/>
            <person name="Garber M."/>
            <person name="Gnirke A."/>
            <person name="Hafez N."/>
            <person name="Hall J.L."/>
            <person name="Norman C.H."/>
            <person name="Itoh T."/>
            <person name="Jaffe D.B."/>
            <person name="Kuroki Y."/>
            <person name="Lehoczky J."/>
            <person name="Lui A."/>
            <person name="Macdonald P."/>
            <person name="Mauceli E."/>
            <person name="Mikkelsen T.S."/>
            <person name="Naylor J.W."/>
            <person name="Nicol R."/>
            <person name="Nguyen C."/>
            <person name="Noguchi H."/>
            <person name="O'Leary S.B."/>
            <person name="Piqani B."/>
            <person name="Smith C.L."/>
            <person name="Talamas J.A."/>
            <person name="Topham K."/>
            <person name="Totoki Y."/>
            <person name="Toyoda A."/>
            <person name="Wain H.M."/>
            <person name="Young S.K."/>
            <person name="Zeng Q."/>
            <person name="Zimmer A.R."/>
            <person name="Fujiyama A."/>
            <person name="Hattori M."/>
            <person name="Birren B.W."/>
            <person name="Sakaki Y."/>
            <person name="Lander E.S."/>
        </authorList>
    </citation>
    <scope>NUCLEOTIDE SEQUENCE [LARGE SCALE GENOMIC DNA]</scope>
    <scope>VARIANT SER-2834</scope>
</reference>
<reference key="5">
    <citation type="journal article" date="1995" name="Genomics">
        <title>Cloning of the laminin alpha 3 chain gene (LAMA3) and identification of a homozygous deletion in a patient with Herlitz junctional epidermolysis bullosa.</title>
        <authorList>
            <person name="Vidal F."/>
            <person name="Baudoin C."/>
            <person name="Miquel C."/>
            <person name="Galliano M.-F."/>
            <person name="Christiano A.M."/>
            <person name="Uitto J."/>
            <person name="Ortonne J.-P."/>
            <person name="Meneguzzi G."/>
        </authorList>
    </citation>
    <scope>NUCLEOTIDE SEQUENCE [MRNA] OF 1-2858 (ISOFORM 1)</scope>
    <scope>NUCLEOTIDE SEQUENCE [MRNA] OF 1528-2858 (ISOFORMS 1/2)</scope>
    <scope>INVOLVEMENT IN JEB2B</scope>
    <source>
        <tissue>Keratinocyte</tissue>
    </source>
</reference>
<reference key="6">
    <citation type="submission" date="1995-02" db="EMBL/GenBank/DDBJ databases">
        <title>Mutation in LAMA3 gene in a patient affected by H-Jeb.</title>
        <authorList>
            <person name="Aberdam D."/>
            <person name="Vidal F."/>
            <person name="Baudoin C."/>
            <person name="Miquel C."/>
            <person name="Ortonne J.-P."/>
            <person name="Meneguzzi G."/>
        </authorList>
    </citation>
    <scope>NUCLEOTIDE SEQUENCE [MRNA] OF 1528-3333 (ISOFORMS 1/2)</scope>
</reference>
<reference key="7">
    <citation type="journal article" date="1994" name="J. Biol. Chem.">
        <title>Cloning of the LamA3 gene encoding the alpha 3 chain of the adhesive ligand epiligrin. Expression in wound repair.</title>
        <authorList>
            <person name="Ryan M.C."/>
            <person name="Tizard R."/>
            <person name="Vandevanter D.R."/>
            <person name="Carter W.G."/>
        </authorList>
    </citation>
    <scope>PARTIAL NUCLEOTIDE SEQUENCE [MRNA] (ISOFORM 1)</scope>
    <source>
        <tissue>Keratinocyte</tissue>
    </source>
</reference>
<reference key="8">
    <citation type="journal article" date="1995" name="Genomics">
        <title>A homozygous nonsense mutation in the alpha 3 chain gene of laminin 5 (LAMA3) in Herlitz junctional epidermolysis bullosa: prenatal exclusion in a fetus at risk.</title>
        <authorList>
            <person name="McGrath J.A."/>
            <person name="Kivirikko S."/>
            <person name="Ciatti S."/>
            <person name="Moss C."/>
            <person name="Dunnill G.S."/>
            <person name="Eady R.A."/>
            <person name="Rodeck C.H."/>
            <person name="Christiano A.M."/>
            <person name="Uitto J."/>
        </authorList>
    </citation>
    <scope>INVOLVEMENT IN JEB2B</scope>
    <scope>VARIANT JEB2B 2270-ARG--GLN-3333 DEL</scope>
</reference>
<reference key="9">
    <citation type="journal article" date="1995" name="Hum. Mol. Genet.">
        <title>A homozygous nonsense mutation in the alpha 3 chain gene of laminin 5 (LAMA3) in lethal (Herlitz) junctional epidermolysis bullosa.</title>
        <authorList>
            <person name="Kivirikko S."/>
            <person name="McGrath J.A."/>
            <person name="Baudoin C."/>
            <person name="Aberdam D."/>
            <person name="Ciatti S."/>
            <person name="Dunnill M.G."/>
            <person name="McMillan J.R."/>
            <person name="Eady R.A."/>
            <person name="Ortonne J.P."/>
            <person name="Meneguzzi G."/>
        </authorList>
    </citation>
    <scope>INVOLVEMENT IN JEB2B</scope>
    <scope>VARIANT JEB2B 2270-ARG--GLN-3333 DEL</scope>
</reference>
<reference key="10">
    <citation type="journal article" date="2002" name="Hum. Genet.">
        <title>Laminin 5 mutations in junctional epidermolysis bullosa: molecular basis of Herlitz vs. non-Herlitz phenotypes.</title>
        <authorList>
            <person name="Nakano A."/>
            <person name="Chao S.C."/>
            <person name="Pulkkinen L."/>
            <person name="Murrell D."/>
            <person name="Bruckner-Tuderman L."/>
            <person name="Pfendner E."/>
            <person name="Uitto J."/>
        </authorList>
    </citation>
    <scope>INVOLVEMENT IN JEB2A</scope>
    <scope>INVOLVEMENT IN JEB2B</scope>
</reference>
<reference key="11">
    <citation type="journal article" date="2011" name="BMC Syst. Biol.">
        <title>Initial characterization of the human central proteome.</title>
        <authorList>
            <person name="Burkard T.R."/>
            <person name="Planyavsky M."/>
            <person name="Kaupe I."/>
            <person name="Breitwieser F.P."/>
            <person name="Buerckstuemmer T."/>
            <person name="Bennett K.L."/>
            <person name="Superti-Furga G."/>
            <person name="Colinge J."/>
        </authorList>
    </citation>
    <scope>IDENTIFICATION BY MASS SPECTROMETRY [LARGE SCALE ANALYSIS]</scope>
</reference>
<keyword id="KW-0025">Alternative splicing</keyword>
<keyword id="KW-0084">Basement membrane</keyword>
<keyword id="KW-0130">Cell adhesion</keyword>
<keyword id="KW-0175">Coiled coil</keyword>
<keyword id="KW-0225">Disease variant</keyword>
<keyword id="KW-1015">Disulfide bond</keyword>
<keyword id="KW-0263">Epidermolysis bullosa</keyword>
<keyword id="KW-0272">Extracellular matrix</keyword>
<keyword id="KW-0325">Glycoprotein</keyword>
<keyword id="KW-0424">Laminin EGF-like domain</keyword>
<keyword id="KW-1267">Proteomics identification</keyword>
<keyword id="KW-1185">Reference proteome</keyword>
<keyword id="KW-0677">Repeat</keyword>
<keyword id="KW-0964">Secreted</keyword>
<keyword id="KW-0732">Signal</keyword>
<dbReference type="EMBL" id="AY327114">
    <property type="protein sequence ID" value="AAQ72569.1"/>
    <property type="molecule type" value="mRNA"/>
</dbReference>
<dbReference type="EMBL" id="AY327115">
    <property type="protein sequence ID" value="AAQ72570.1"/>
    <property type="molecule type" value="mRNA"/>
</dbReference>
<dbReference type="EMBL" id="AY327116">
    <property type="protein sequence ID" value="AAQ72571.1"/>
    <property type="molecule type" value="mRNA"/>
</dbReference>
<dbReference type="EMBL" id="AB107369">
    <property type="protein sequence ID" value="BAD13428.1"/>
    <property type="molecule type" value="Genomic_DNA"/>
</dbReference>
<dbReference type="EMBL" id="EF444992">
    <property type="protein sequence ID" value="ACA06011.1"/>
    <property type="molecule type" value="Genomic_DNA"/>
</dbReference>
<dbReference type="EMBL" id="AC010754">
    <property type="status" value="NOT_ANNOTATED_CDS"/>
    <property type="molecule type" value="Genomic_DNA"/>
</dbReference>
<dbReference type="EMBL" id="AC067796">
    <property type="status" value="NOT_ANNOTATED_CDS"/>
    <property type="molecule type" value="Genomic_DNA"/>
</dbReference>
<dbReference type="EMBL" id="AC090366">
    <property type="status" value="NOT_ANNOTATED_CDS"/>
    <property type="molecule type" value="Genomic_DNA"/>
</dbReference>
<dbReference type="EMBL" id="X85107">
    <property type="protein sequence ID" value="CAA59428.1"/>
    <property type="molecule type" value="mRNA"/>
</dbReference>
<dbReference type="EMBL" id="X85108">
    <property type="protein sequence ID" value="CAA59429.1"/>
    <property type="molecule type" value="mRNA"/>
</dbReference>
<dbReference type="EMBL" id="X84900">
    <property type="protein sequence ID" value="CAA59325.1"/>
    <property type="molecule type" value="mRNA"/>
</dbReference>
<dbReference type="EMBL" id="L34155">
    <property type="protein sequence ID" value="AAA59483.1"/>
    <property type="molecule type" value="mRNA"/>
</dbReference>
<dbReference type="CCDS" id="CCDS11880.1">
    <molecule id="Q16787-1"/>
</dbReference>
<dbReference type="CCDS" id="CCDS42419.1">
    <molecule id="Q16787-2"/>
</dbReference>
<dbReference type="CCDS" id="CCDS45838.1">
    <molecule id="Q16787-3"/>
</dbReference>
<dbReference type="CCDS" id="CCDS59307.1">
    <molecule id="Q16787-4"/>
</dbReference>
<dbReference type="PIR" id="A55347">
    <property type="entry name" value="A55347"/>
</dbReference>
<dbReference type="RefSeq" id="NP_000218.3">
    <molecule id="Q16787-1"/>
    <property type="nucleotide sequence ID" value="NM_000227.4"/>
</dbReference>
<dbReference type="RefSeq" id="NP_001121189.2">
    <molecule id="Q16787-3"/>
    <property type="nucleotide sequence ID" value="NM_001127717.4"/>
</dbReference>
<dbReference type="RefSeq" id="NP_001121190.2">
    <molecule id="Q16787-4"/>
    <property type="nucleotide sequence ID" value="NM_001127718.4"/>
</dbReference>
<dbReference type="RefSeq" id="NP_001289925.1">
    <property type="nucleotide sequence ID" value="NM_001302996.1"/>
</dbReference>
<dbReference type="RefSeq" id="NP_937762.2">
    <molecule id="Q16787-2"/>
    <property type="nucleotide sequence ID" value="NM_198129.4"/>
</dbReference>
<dbReference type="SMR" id="Q16787"/>
<dbReference type="BioGRID" id="110103">
    <property type="interactions" value="57"/>
</dbReference>
<dbReference type="ComplexPortal" id="CPX-1774">
    <molecule id="Q16787-1"/>
    <property type="entry name" value="Laminin-332 complex variant A"/>
</dbReference>
<dbReference type="ComplexPortal" id="CPX-1775">
    <molecule id="Q16787-1"/>
    <property type="entry name" value="Laminin-311 complex variant A"/>
</dbReference>
<dbReference type="ComplexPortal" id="CPX-1776">
    <molecule id="Q16787-1"/>
    <property type="entry name" value="Laminin-321 complex"/>
</dbReference>
<dbReference type="ComplexPortal" id="CPX-3165">
    <molecule id="Q16787-2"/>
    <property type="entry name" value="Laminin-332 complex variant B"/>
</dbReference>
<dbReference type="ComplexPortal" id="CPX-3166">
    <molecule id="Q16787-2"/>
    <property type="entry name" value="Laminin-311 complex variant B"/>
</dbReference>
<dbReference type="CORUM" id="Q16787"/>
<dbReference type="FunCoup" id="Q16787">
    <property type="interactions" value="963"/>
</dbReference>
<dbReference type="IntAct" id="Q16787">
    <property type="interactions" value="39"/>
</dbReference>
<dbReference type="MINT" id="Q16787"/>
<dbReference type="STRING" id="9606.ENSP00000324532"/>
<dbReference type="ChEMBL" id="CHEMBL2364187"/>
<dbReference type="DrugBank" id="DB06245">
    <property type="generic name" value="Lanoteplase"/>
</dbReference>
<dbReference type="GlyCosmos" id="Q16787">
    <property type="glycosylation" value="6 sites, 1 glycan"/>
</dbReference>
<dbReference type="GlyGen" id="Q16787">
    <property type="glycosylation" value="19 sites, 9 N-linked glycans (9 sites), 3 O-linked glycans (6 sites)"/>
</dbReference>
<dbReference type="iPTMnet" id="Q16787"/>
<dbReference type="PhosphoSitePlus" id="Q16787"/>
<dbReference type="SwissPalm" id="Q16787"/>
<dbReference type="BioMuta" id="LAMA3"/>
<dbReference type="DMDM" id="215274012"/>
<dbReference type="jPOST" id="Q16787"/>
<dbReference type="MassIVE" id="Q16787"/>
<dbReference type="PaxDb" id="9606-ENSP00000324532"/>
<dbReference type="PeptideAtlas" id="Q16787"/>
<dbReference type="ProteomicsDB" id="2880"/>
<dbReference type="ProteomicsDB" id="61068">
    <molecule id="Q16787-2"/>
</dbReference>
<dbReference type="ProteomicsDB" id="61069">
    <molecule id="Q16787-1"/>
</dbReference>
<dbReference type="ProteomicsDB" id="61070">
    <molecule id="Q16787-3"/>
</dbReference>
<dbReference type="Pumba" id="Q16787"/>
<dbReference type="Antibodypedia" id="1948">
    <property type="antibodies" value="197 antibodies from 30 providers"/>
</dbReference>
<dbReference type="DNASU" id="3909"/>
<dbReference type="Ensembl" id="ENST00000269217.11">
    <molecule id="Q16787-1"/>
    <property type="protein sequence ID" value="ENSP00000269217.5"/>
    <property type="gene ID" value="ENSG00000053747.17"/>
</dbReference>
<dbReference type="Ensembl" id="ENST00000313654.14">
    <molecule id="Q16787-2"/>
    <property type="protein sequence ID" value="ENSP00000324532.8"/>
    <property type="gene ID" value="ENSG00000053747.17"/>
</dbReference>
<dbReference type="Ensembl" id="ENST00000399516.7">
    <molecule id="Q16787-3"/>
    <property type="protein sequence ID" value="ENSP00000382432.2"/>
    <property type="gene ID" value="ENSG00000053747.17"/>
</dbReference>
<dbReference type="Ensembl" id="ENST00000587184.5">
    <molecule id="Q16787-4"/>
    <property type="protein sequence ID" value="ENSP00000466557.1"/>
    <property type="gene ID" value="ENSG00000053747.17"/>
</dbReference>
<dbReference type="GeneID" id="3909"/>
<dbReference type="KEGG" id="hsa:3909"/>
<dbReference type="MANE-Select" id="ENST00000313654.14">
    <property type="protein sequence ID" value="ENSP00000324532.8"/>
    <property type="RefSeq nucleotide sequence ID" value="NM_198129.4"/>
    <property type="RefSeq protein sequence ID" value="NP_937762.2"/>
</dbReference>
<dbReference type="UCSC" id="uc002kuq.4">
    <molecule id="Q16787-2"/>
    <property type="organism name" value="human"/>
</dbReference>
<dbReference type="AGR" id="HGNC:6483"/>
<dbReference type="CTD" id="3909"/>
<dbReference type="DisGeNET" id="3909"/>
<dbReference type="GeneCards" id="LAMA3"/>
<dbReference type="GeneReviews" id="LAMA3"/>
<dbReference type="HGNC" id="HGNC:6483">
    <property type="gene designation" value="LAMA3"/>
</dbReference>
<dbReference type="HPA" id="ENSG00000053747">
    <property type="expression patterns" value="Low tissue specificity"/>
</dbReference>
<dbReference type="MalaCards" id="LAMA3"/>
<dbReference type="MIM" id="245660">
    <property type="type" value="phenotype"/>
</dbReference>
<dbReference type="MIM" id="600805">
    <property type="type" value="gene"/>
</dbReference>
<dbReference type="MIM" id="619783">
    <property type="type" value="phenotype"/>
</dbReference>
<dbReference type="MIM" id="619784">
    <property type="type" value="phenotype"/>
</dbReference>
<dbReference type="neXtProt" id="NX_Q16787"/>
<dbReference type="OpenTargets" id="ENSG00000053747"/>
<dbReference type="Orphanet" id="79402">
    <property type="disease" value="Intermediate generalized junctional epidermolysis bullosa"/>
</dbReference>
<dbReference type="Orphanet" id="2407">
    <property type="disease" value="Laryngo-onycho-cutaneous syndrome"/>
</dbReference>
<dbReference type="Orphanet" id="79404">
    <property type="disease" value="Severe generalized junctional epidermolysis bullosa"/>
</dbReference>
<dbReference type="PharmGKB" id="PA30272"/>
<dbReference type="VEuPathDB" id="HostDB:ENSG00000053747"/>
<dbReference type="eggNOG" id="KOG1836">
    <property type="taxonomic scope" value="Eukaryota"/>
</dbReference>
<dbReference type="GeneTree" id="ENSGT00940000155638"/>
<dbReference type="InParanoid" id="Q16787"/>
<dbReference type="OrthoDB" id="18487at2759"/>
<dbReference type="PAN-GO" id="Q16787">
    <property type="GO annotations" value="11 GO annotations based on evolutionary models"/>
</dbReference>
<dbReference type="PhylomeDB" id="Q16787"/>
<dbReference type="TreeFam" id="TF335359"/>
<dbReference type="PathwayCommons" id="Q16787"/>
<dbReference type="Reactome" id="R-HSA-1474228">
    <property type="pathway name" value="Degradation of the extracellular matrix"/>
</dbReference>
<dbReference type="Reactome" id="R-HSA-2022090">
    <property type="pathway name" value="Assembly of collagen fibrils and other multimeric structures"/>
</dbReference>
<dbReference type="Reactome" id="R-HSA-2214320">
    <property type="pathway name" value="Anchoring fibril formation"/>
</dbReference>
<dbReference type="Reactome" id="R-HSA-3000157">
    <property type="pathway name" value="Laminin interactions"/>
</dbReference>
<dbReference type="Reactome" id="R-HSA-3000171">
    <property type="pathway name" value="Non-integrin membrane-ECM interactions"/>
</dbReference>
<dbReference type="Reactome" id="R-HSA-3000178">
    <property type="pathway name" value="ECM proteoglycans"/>
</dbReference>
<dbReference type="Reactome" id="R-HSA-446107">
    <property type="pathway name" value="Type I hemidesmosome assembly"/>
</dbReference>
<dbReference type="Reactome" id="R-HSA-8874081">
    <property type="pathway name" value="MET activates PTK2 signaling"/>
</dbReference>
<dbReference type="Reactome" id="R-HSA-9913351">
    <property type="pathway name" value="Formation of the dystrophin-glycoprotein complex (DGC)"/>
</dbReference>
<dbReference type="SignaLink" id="Q16787"/>
<dbReference type="SIGNOR" id="Q16787"/>
<dbReference type="BioGRID-ORCS" id="3909">
    <property type="hits" value="22 hits in 1152 CRISPR screens"/>
</dbReference>
<dbReference type="ChiTaRS" id="LAMA3">
    <property type="organism name" value="human"/>
</dbReference>
<dbReference type="GeneWiki" id="Laminin,_alpha_3"/>
<dbReference type="GenomeRNAi" id="3909"/>
<dbReference type="Pharos" id="Q16787">
    <property type="development level" value="Tbio"/>
</dbReference>
<dbReference type="PRO" id="PR:Q16787"/>
<dbReference type="Proteomes" id="UP000005640">
    <property type="component" value="Chromosome 18"/>
</dbReference>
<dbReference type="RNAct" id="Q16787">
    <property type="molecule type" value="protein"/>
</dbReference>
<dbReference type="Bgee" id="ENSG00000053747">
    <property type="expression patterns" value="Expressed in right lung and 157 other cell types or tissues"/>
</dbReference>
<dbReference type="ExpressionAtlas" id="Q16787">
    <property type="expression patterns" value="baseline and differential"/>
</dbReference>
<dbReference type="GO" id="GO:0005912">
    <property type="term" value="C:adherens junction"/>
    <property type="evidence" value="ECO:0007669"/>
    <property type="project" value="Ensembl"/>
</dbReference>
<dbReference type="GO" id="GO:0005604">
    <property type="term" value="C:basement membrane"/>
    <property type="evidence" value="ECO:0000304"/>
    <property type="project" value="ProtInc"/>
</dbReference>
<dbReference type="GO" id="GO:0062023">
    <property type="term" value="C:collagen-containing extracellular matrix"/>
    <property type="evidence" value="ECO:0007005"/>
    <property type="project" value="BHF-UCL"/>
</dbReference>
<dbReference type="GO" id="GO:0005783">
    <property type="term" value="C:endoplasmic reticulum"/>
    <property type="evidence" value="ECO:0000314"/>
    <property type="project" value="HPA"/>
</dbReference>
<dbReference type="GO" id="GO:0070062">
    <property type="term" value="C:extracellular exosome"/>
    <property type="evidence" value="ECO:0007005"/>
    <property type="project" value="UniProtKB"/>
</dbReference>
<dbReference type="GO" id="GO:0005576">
    <property type="term" value="C:extracellular region"/>
    <property type="evidence" value="ECO:0000304"/>
    <property type="project" value="Reactome"/>
</dbReference>
<dbReference type="GO" id="GO:0030056">
    <property type="term" value="C:hemidesmosome"/>
    <property type="evidence" value="ECO:0007669"/>
    <property type="project" value="Ensembl"/>
</dbReference>
<dbReference type="GO" id="GO:0005608">
    <property type="term" value="C:laminin-3 complex"/>
    <property type="evidence" value="ECO:0007669"/>
    <property type="project" value="Ensembl"/>
</dbReference>
<dbReference type="GO" id="GO:0005610">
    <property type="term" value="C:laminin-5 complex"/>
    <property type="evidence" value="ECO:0007669"/>
    <property type="project" value="Ensembl"/>
</dbReference>
<dbReference type="GO" id="GO:0005102">
    <property type="term" value="F:signaling receptor binding"/>
    <property type="evidence" value="ECO:0007669"/>
    <property type="project" value="InterPro"/>
</dbReference>
<dbReference type="GO" id="GO:0005198">
    <property type="term" value="F:structural molecule activity"/>
    <property type="evidence" value="ECO:0000303"/>
    <property type="project" value="ProtInc"/>
</dbReference>
<dbReference type="GO" id="GO:0098609">
    <property type="term" value="P:cell-cell adhesion"/>
    <property type="evidence" value="ECO:0007669"/>
    <property type="project" value="Ensembl"/>
</dbReference>
<dbReference type="GO" id="GO:0035987">
    <property type="term" value="P:endodermal cell differentiation"/>
    <property type="evidence" value="ECO:0000270"/>
    <property type="project" value="UniProtKB"/>
</dbReference>
<dbReference type="GO" id="GO:0008544">
    <property type="term" value="P:epidermis development"/>
    <property type="evidence" value="ECO:0000304"/>
    <property type="project" value="ProtInc"/>
</dbReference>
<dbReference type="GO" id="GO:0031581">
    <property type="term" value="P:hemidesmosome assembly"/>
    <property type="evidence" value="ECO:0007669"/>
    <property type="project" value="Ensembl"/>
</dbReference>
<dbReference type="GO" id="GO:0030155">
    <property type="term" value="P:regulation of cell adhesion"/>
    <property type="evidence" value="ECO:0007669"/>
    <property type="project" value="InterPro"/>
</dbReference>
<dbReference type="GO" id="GO:0030334">
    <property type="term" value="P:regulation of cell migration"/>
    <property type="evidence" value="ECO:0007669"/>
    <property type="project" value="InterPro"/>
</dbReference>
<dbReference type="GO" id="GO:0045995">
    <property type="term" value="P:regulation of embryonic development"/>
    <property type="evidence" value="ECO:0007669"/>
    <property type="project" value="InterPro"/>
</dbReference>
<dbReference type="CDD" id="cd00055">
    <property type="entry name" value="EGF_Lam"/>
    <property type="match status" value="14"/>
</dbReference>
<dbReference type="CDD" id="cd00110">
    <property type="entry name" value="LamG"/>
    <property type="match status" value="5"/>
</dbReference>
<dbReference type="FunFam" id="2.10.25.10:FF:000011">
    <property type="entry name" value="Cadherin EGF LAG seven-pass G-type receptor"/>
    <property type="match status" value="1"/>
</dbReference>
<dbReference type="FunFam" id="2.10.25.10:FF:000106">
    <property type="entry name" value="Heparan sulfate proteoglycan 2"/>
    <property type="match status" value="1"/>
</dbReference>
<dbReference type="FunFam" id="2.10.25.10:FF:000083">
    <property type="entry name" value="Laminin subunit alpha"/>
    <property type="match status" value="2"/>
</dbReference>
<dbReference type="FunFam" id="2.10.25.10:FF:000090">
    <property type="entry name" value="laminin subunit alpha"/>
    <property type="match status" value="1"/>
</dbReference>
<dbReference type="FunFam" id="2.10.25.10:FF:000069">
    <property type="entry name" value="Laminin subunit alpha 1"/>
    <property type="match status" value="1"/>
</dbReference>
<dbReference type="FunFam" id="2.10.25.10:FF:000033">
    <property type="entry name" value="Laminin subunit alpha 2"/>
    <property type="match status" value="1"/>
</dbReference>
<dbReference type="FunFam" id="2.10.25.10:FF:000034">
    <property type="entry name" value="Laminin subunit alpha 3"/>
    <property type="match status" value="1"/>
</dbReference>
<dbReference type="FunFam" id="2.10.25.10:FF:000084">
    <property type="entry name" value="Laminin subunit alpha 3"/>
    <property type="match status" value="1"/>
</dbReference>
<dbReference type="FunFam" id="2.10.25.10:FF:000390">
    <property type="entry name" value="Laminin subunit alpha 3"/>
    <property type="match status" value="1"/>
</dbReference>
<dbReference type="FunFam" id="2.10.25.10:FF:000460">
    <property type="entry name" value="Laminin subunit alpha 3"/>
    <property type="match status" value="1"/>
</dbReference>
<dbReference type="FunFam" id="2.60.120.200:FF:000056">
    <property type="entry name" value="Laminin subunit alpha 3"/>
    <property type="match status" value="1"/>
</dbReference>
<dbReference type="FunFam" id="2.60.120.200:FF:000092">
    <property type="entry name" value="Laminin subunit alpha 3"/>
    <property type="match status" value="1"/>
</dbReference>
<dbReference type="FunFam" id="2.60.120.200:FF:000093">
    <property type="entry name" value="Laminin subunit alpha 3"/>
    <property type="match status" value="1"/>
</dbReference>
<dbReference type="FunFam" id="2.60.120.200:FF:000102">
    <property type="entry name" value="Laminin subunit alpha 3"/>
    <property type="match status" value="1"/>
</dbReference>
<dbReference type="FunFam" id="2.60.120.200:FF:000109">
    <property type="entry name" value="Laminin subunit alpha 3"/>
    <property type="match status" value="1"/>
</dbReference>
<dbReference type="FunFam" id="2.10.25.10:FF:000209">
    <property type="entry name" value="Laminin subunit alpha 5"/>
    <property type="match status" value="1"/>
</dbReference>
<dbReference type="FunFam" id="2.60.120.260:FF:000022">
    <property type="entry name" value="Laminin subunit alpha 5"/>
    <property type="match status" value="1"/>
</dbReference>
<dbReference type="Gene3D" id="1.20.5.170">
    <property type="match status" value="1"/>
</dbReference>
<dbReference type="Gene3D" id="2.60.120.200">
    <property type="match status" value="5"/>
</dbReference>
<dbReference type="Gene3D" id="2.60.120.260">
    <property type="entry name" value="Galactose-binding domain-like"/>
    <property type="match status" value="1"/>
</dbReference>
<dbReference type="Gene3D" id="2.10.25.10">
    <property type="entry name" value="Laminin"/>
    <property type="match status" value="12"/>
</dbReference>
<dbReference type="InterPro" id="IPR013320">
    <property type="entry name" value="ConA-like_dom_sf"/>
</dbReference>
<dbReference type="InterPro" id="IPR000742">
    <property type="entry name" value="EGF-like_dom"/>
</dbReference>
<dbReference type="InterPro" id="IPR050440">
    <property type="entry name" value="Laminin/Netrin_ECM"/>
</dbReference>
<dbReference type="InterPro" id="IPR009254">
    <property type="entry name" value="Laminin_aI"/>
</dbReference>
<dbReference type="InterPro" id="IPR010307">
    <property type="entry name" value="Laminin_dom_II"/>
</dbReference>
<dbReference type="InterPro" id="IPR001791">
    <property type="entry name" value="Laminin_G"/>
</dbReference>
<dbReference type="InterPro" id="IPR000034">
    <property type="entry name" value="Laminin_IV"/>
</dbReference>
<dbReference type="InterPro" id="IPR008211">
    <property type="entry name" value="Laminin_N"/>
</dbReference>
<dbReference type="InterPro" id="IPR002049">
    <property type="entry name" value="LE_dom"/>
</dbReference>
<dbReference type="InterPro" id="IPR056863">
    <property type="entry name" value="LMN_ATRN_NET-like_EGF"/>
</dbReference>
<dbReference type="PANTHER" id="PTHR10574:SF445">
    <property type="entry name" value="LAMININ SUBUNIT ALPHA 3"/>
    <property type="match status" value="1"/>
</dbReference>
<dbReference type="PANTHER" id="PTHR10574">
    <property type="entry name" value="NETRIN/LAMININ-RELATED"/>
    <property type="match status" value="1"/>
</dbReference>
<dbReference type="Pfam" id="PF00053">
    <property type="entry name" value="EGF_laminin"/>
    <property type="match status" value="11"/>
</dbReference>
<dbReference type="Pfam" id="PF24973">
    <property type="entry name" value="EGF_LMN_ATRN"/>
    <property type="match status" value="1"/>
</dbReference>
<dbReference type="Pfam" id="PF00052">
    <property type="entry name" value="Laminin_B"/>
    <property type="match status" value="1"/>
</dbReference>
<dbReference type="Pfam" id="PF02210">
    <property type="entry name" value="Laminin_G_2"/>
    <property type="match status" value="5"/>
</dbReference>
<dbReference type="Pfam" id="PF06008">
    <property type="entry name" value="Laminin_I"/>
    <property type="match status" value="1"/>
</dbReference>
<dbReference type="Pfam" id="PF06009">
    <property type="entry name" value="Laminin_II"/>
    <property type="match status" value="1"/>
</dbReference>
<dbReference type="Pfam" id="PF00055">
    <property type="entry name" value="Laminin_N"/>
    <property type="match status" value="1"/>
</dbReference>
<dbReference type="PRINTS" id="PR00011">
    <property type="entry name" value="EGFLAMININ"/>
</dbReference>
<dbReference type="SMART" id="SM00181">
    <property type="entry name" value="EGF"/>
    <property type="match status" value="8"/>
</dbReference>
<dbReference type="SMART" id="SM00180">
    <property type="entry name" value="EGF_Lam"/>
    <property type="match status" value="14"/>
</dbReference>
<dbReference type="SMART" id="SM00281">
    <property type="entry name" value="LamB"/>
    <property type="match status" value="1"/>
</dbReference>
<dbReference type="SMART" id="SM00282">
    <property type="entry name" value="LamG"/>
    <property type="match status" value="5"/>
</dbReference>
<dbReference type="SMART" id="SM00136">
    <property type="entry name" value="LamNT"/>
    <property type="match status" value="1"/>
</dbReference>
<dbReference type="SUPFAM" id="SSF49899">
    <property type="entry name" value="Concanavalin A-like lectins/glucanases"/>
    <property type="match status" value="5"/>
</dbReference>
<dbReference type="SUPFAM" id="SSF57196">
    <property type="entry name" value="EGF/Laminin"/>
    <property type="match status" value="12"/>
</dbReference>
<dbReference type="PROSITE" id="PS00022">
    <property type="entry name" value="EGF_1"/>
    <property type="match status" value="12"/>
</dbReference>
<dbReference type="PROSITE" id="PS01186">
    <property type="entry name" value="EGF_2"/>
    <property type="match status" value="1"/>
</dbReference>
<dbReference type="PROSITE" id="PS01248">
    <property type="entry name" value="EGF_LAM_1"/>
    <property type="match status" value="13"/>
</dbReference>
<dbReference type="PROSITE" id="PS50027">
    <property type="entry name" value="EGF_LAM_2"/>
    <property type="match status" value="14"/>
</dbReference>
<dbReference type="PROSITE" id="PS50025">
    <property type="entry name" value="LAM_G_DOMAIN"/>
    <property type="match status" value="5"/>
</dbReference>
<dbReference type="PROSITE" id="PS51115">
    <property type="entry name" value="LAMININ_IVA"/>
    <property type="match status" value="1"/>
</dbReference>
<dbReference type="PROSITE" id="PS51117">
    <property type="entry name" value="LAMININ_NTER"/>
    <property type="match status" value="1"/>
</dbReference>
<sequence>MAAAARPRGRALGPVLPPTPLLLLVLRVLPACGATARDPGAAAGLSLHPTYFNLAEAARIWATATCGERGPGEGRPQPELYCKLVGGPTAPGSGHTIQGQFCDYCNSEDPRKAHPVTNAIDGSERWWQSPPLSSGTQYNRVNLTLDLGQLFHVAYILIKFANSPRPDLWVLERSVDFGSTYSPWQYFAHSKVDCLKEFGREANMAVTRDDDVLCVTEYSRIVPLENGEVVVSLINGRPGAKNFTFSHTLREFTKATNIRLRFLRTNTLLGHLISKAQRDPTVTRRYYYSIKDISIGGQCVCNGHAEVCNINNPEKLFRCECQHHTCGETCDRCCTGYNQRRWRPAAWEQSHECEACNCHGHASNCYYDPDVERQQASLNTQGIYAGGGVCINCQHNTAGVNCEQCAKGYYRPYGVPVDAPDGCIPCSCDPEHADGCEQGSGRCHCKPNFHGDNCEKCAIGYYNFPFCLRIPIFPVSTPSSEDPVAGDIKGCDCNLEGVLPEICDAHGRCLCRPGVEGPRCDTCRSGFYSFPICQACWCSALGSYQMPCSSVTGQCECRPGVTGQRCDRCLSGAYDFPHCQGSSSACDPAGTINSNLGYCQCKLHVEGPTCSRCKLLYWNLDKENPSGCSECKCHKAGTVSGTGECRQGDGDCHCKSHVGGDSCDTCEDGYFALEKSNYFGCQGCQCDIGGALSSMCSGPSGVCQCREHVVGKVCQRPENNYYFPDLHHMKYEIEDGSTPNGRDLRFGFDPLAFPEFSWRGYAQMTSVQNDVRITLNVGKSSGSLFRVILRYVNPGTEAVSGHITIYPSWGAAQSKEIIFLPSKEPAFVTVPGNGFADPFSITPGIWVACIKAEGVLLDYLVLLPRDYYEASVLQLPVTEPCAYAGPPQENCLLYQHLPVTRFPCTLACEARHFLLDGEPRPVAVRQPTPAHPVMVDLSGREVELHLRLRIPQVGHYVVVVEYSTEAAQLFVVDVNVKSSGSVLAGQVNIYSCNYSVLCRSAVIDHMSRIAMYELLADADIQLKGHMARFLLHQVCIIPIEEFSAEYVRPQVHCIASYGRFVNQSATCVSLAHETPPTALILDVLSGRPFPHLPQQSSPSVDVLPGVTLKAPQNQVTLRGRVPHLGRYVFVIHFYQAAHPTFPAQVSVDGGWPRAGSFHASFCPHVLGCRDQVIAEGQIEFDISEPEVAATVKVPEGKSLVLVRVLVVPAENYDYQILHKKSMDKSLEFITNCGKNSFYLDPQTASRFCKNSARSLVAFYHKGALPCECHPTGATGPHCSPEGGQCPCQPNVIGRQCTRCATGHYGFPRCKPCSCGRRLCEEMTGQCRCPPRTVRPQCEVCETHSFSFHPMAGCEGCNCSRRGTIEAAMPECDRDSGQCRCKPRITGRQCDRCASGFYRFPECVPCNCNRDGTEPGVCDPGTGACLCKENVEGTECNVCREGSFHLDPANLKGCTSCFCFGVNNQCHSSHKRRTKFVDMLGWHLETADRVDIPVSFNPGSNSMVADLQELPATIHSASWVAPTSYLGDKVSSYGGYLTYQAKSFGLPGDMVLLEKKPDVQLTGQHMSIIYEETNTPRPDRLHHGRVHVVEGNFRHASSRAPVSREELMTVLSRLADVRIQGLYFTETQRLTLSEVGLEEASDTGSGRIALAVEICACPPAYAGDSCQGCSPGYYRDHKGLYTGRCVPCNCNGHSNQCQDGSGICVNCQHNTAGEHCERCQEGYYGNAVHGSCRACPCPHTNSFATGCVVNGGDVRCSCKAGYTGTQCERCAPGYFGNPQKFGGSCQPCSCNSNGQLGSCHPLTGDCINQEPKDSSPAEECDDCDSCVMTLLNDLATMGEQLRLVKSQLQGLSASAGLLEQMRHMETQAKDLRNQLLNYRSAISNHGSKIEGLERELTDLNQEFETLQEKAQVNSRKAQTLNNNVNRATQSAKELDVKIKNVIRNVHILLKQISGTDGEGNNVPSGDFSREWAEAQRMMRELRNRNFGKHLREAEADKRESQLLLNRIRTWQKTHQGENNGLANSIRDSLNEYEAKLSDLRARLQEAAAQAKQANGLNQENERALGAIQRQVKEINSLQSDFTKYLTTADSSLLQTNIALQLMEKSQKEYEKLAASLNEARQELSDKVRELSRSAGKTSLVEEAEKHARSLQELAKQLEEIKRNASGDELVRCAVDAATAYENILNAIKAAEDAANRAASASESALQTVIKEDLPRKAKTLSSNSDKLLNEAKMTQKKLKQEVSPALNNLQQTLNIVTVQKEVIDTNLTTLRDGLHGIQRGDIDAMISSAKSMVRKANDITDEVLDGLNPIQTDVERIKDTYGRTQNEDFKKALTDADNSVNKLTNKLPDLWRKIESINQQLLPLGNISDNMDRIRELIQQARDAASKVAVPMRFNGKSGVEVRLPNDLEDLKGYTSLSLFLQRPNSRENGGTENMFVMYLGNKDASRDYIGMAVVDGQLTCVYNLGDREAELQVDQILTKSETKEAVMDRVKFQRIYQFARLNYTKGATSSKPETPGVYDMDGRNSNTLLNLDPENVVFYVGGYPPDFKLPSRLSFPPYKGCIELDDLNENVLSLYNFKKTFNLNTTEVEPCRRRKEESDKNYFEGTGYARVPTQPHAPIPTFGQTIQTTVDRGLLFFAENGDRFISLNIEDGKLMVRYKLNSELPKERGVGDAINNGRDHSIQIKIGKLQKRMWINVDVQNTIIDGEVFDFSTYYLGGIPIAIRERFNISTPAFRGCMKNLKKTSGVVRLNDTVGVTKKCSEDWKLVRSASFSRGGQLSFTDLGLPPTDHLQASFGFQTFQPSGILLDHQTWTRNLQVTLEDGYIELSTSDSGGPIFKSPQTYMDGLLHYVSVISDNSGLRLLIDDQLLRNSKRLKHISSSRQSLRLGGSNFEGCISNVFVQRLSLSPEVLDLTSNSLKRDVSLGGCSLNKPPFLMLLKGSTRFNKTKTFRINQLLQDTPVASPRSVKVWQDACSPLPKTQANHGALQFGDIPTSHLLFKLPQELLKPRSQFAVDMQTTSSRGLVFHTGTKNSFMALYLSKGRLVFALGTDGKKLRIKSKEKCNDGKWHTVVFGHDGEKGRLVVDGLRAREGSLPGNSTISIRAPVYLGSPPSGKPKSLPTNSFVGCLKNFQLDSKPLYTPSSSFGVSSCLGGPLEKGIYFSEEGGHVVLAHSVLLGPEFKLVFSIRPRSLTGILIHIGSQPGKHLCVYLEAGKVTASMDSGAGGTSTSVTPKQSLCDGQWHSVAVTIKQHILHLELDTDSSYTAGQIPFPPASTQEPLHLGGAPANLTTLRIPVWKSFFGCLRNIHVNHIPVPVTEALEVQGPVSLNGCPDQ</sequence>
<evidence type="ECO:0000250" key="1"/>
<evidence type="ECO:0000255" key="2"/>
<evidence type="ECO:0000255" key="3">
    <source>
        <dbReference type="PROSITE-ProRule" id="PRU00122"/>
    </source>
</evidence>
<evidence type="ECO:0000255" key="4">
    <source>
        <dbReference type="PROSITE-ProRule" id="PRU00458"/>
    </source>
</evidence>
<evidence type="ECO:0000255" key="5">
    <source>
        <dbReference type="PROSITE-ProRule" id="PRU00460"/>
    </source>
</evidence>
<evidence type="ECO:0000255" key="6">
    <source>
        <dbReference type="PROSITE-ProRule" id="PRU00466"/>
    </source>
</evidence>
<evidence type="ECO:0000269" key="7">
    <source>
    </source>
</evidence>
<evidence type="ECO:0000269" key="8">
    <source>
    </source>
</evidence>
<evidence type="ECO:0000269" key="9">
    <source>
    </source>
</evidence>
<evidence type="ECO:0000269" key="10">
    <source>
    </source>
</evidence>
<evidence type="ECO:0000269" key="11">
    <source>
    </source>
</evidence>
<evidence type="ECO:0000269" key="12">
    <source>
    </source>
</evidence>
<evidence type="ECO:0000269" key="13">
    <source>
    </source>
</evidence>
<evidence type="ECO:0000269" key="14">
    <source>
    </source>
</evidence>
<evidence type="ECO:0000269" key="15">
    <source ref="6"/>
</evidence>
<evidence type="ECO:0000303" key="16">
    <source>
    </source>
</evidence>
<evidence type="ECO:0000303" key="17">
    <source>
    </source>
</evidence>
<evidence type="ECO:0000305" key="18"/>
<feature type="signal peptide" evidence="2">
    <location>
        <begin position="1"/>
        <end position="35"/>
    </location>
</feature>
<feature type="chain" id="PRO_0000017058" description="Laminin subunit alpha-3">
    <location>
        <begin position="36"/>
        <end position="3333"/>
    </location>
</feature>
<feature type="domain" description="Laminin N-terminal" evidence="6">
    <location>
        <begin position="43"/>
        <end position="298"/>
    </location>
</feature>
<feature type="domain" description="Laminin EGF-like 1" evidence="5">
    <location>
        <begin position="299"/>
        <end position="355"/>
    </location>
</feature>
<feature type="domain" description="Laminin EGF-like 2" evidence="5">
    <location>
        <begin position="356"/>
        <end position="425"/>
    </location>
</feature>
<feature type="domain" description="Laminin EGF-like 3" evidence="5">
    <location>
        <begin position="426"/>
        <end position="469"/>
    </location>
</feature>
<feature type="domain" description="Laminin EGF-like 4" evidence="5">
    <location>
        <begin position="491"/>
        <end position="535"/>
    </location>
</feature>
<feature type="domain" description="Laminin EGF-like 5" evidence="5">
    <location>
        <begin position="536"/>
        <end position="588"/>
    </location>
</feature>
<feature type="domain" description="Laminin EGF-like 6" evidence="5">
    <location>
        <begin position="590"/>
        <end position="630"/>
    </location>
</feature>
<feature type="domain" description="Laminin EGF-like 7" evidence="5">
    <location>
        <begin position="631"/>
        <end position="683"/>
    </location>
</feature>
<feature type="domain" description="Laminin EGF-like 8" evidence="5">
    <location>
        <begin position="684"/>
        <end position="728"/>
    </location>
</feature>
<feature type="domain" description="Laminin EGF-like 9" evidence="5">
    <location>
        <begin position="1266"/>
        <end position="1311"/>
    </location>
</feature>
<feature type="domain" description="Laminin EGF-like 10" evidence="5">
    <location>
        <begin position="1312"/>
        <end position="1355"/>
    </location>
</feature>
<feature type="domain" description="Laminin EGF-like 11" evidence="5">
    <location>
        <begin position="1356"/>
        <end position="1404"/>
    </location>
</feature>
<feature type="domain" description="Laminin EGF-like 12" evidence="5">
    <location>
        <begin position="1405"/>
        <end position="1455"/>
    </location>
</feature>
<feature type="domain" description="Laminin IV type A" evidence="4">
    <location>
        <begin position="1476"/>
        <end position="1653"/>
    </location>
</feature>
<feature type="domain" description="Laminin EGF-like 13" evidence="5">
    <location>
        <begin position="1687"/>
        <end position="1733"/>
    </location>
</feature>
<feature type="domain" description="Laminin EGF-like 14" evidence="5">
    <location>
        <begin position="1734"/>
        <end position="1786"/>
    </location>
</feature>
<feature type="domain" description="Laminin EGF-like 15; truncated" evidence="5">
    <location>
        <begin position="1787"/>
        <end position="1821"/>
    </location>
</feature>
<feature type="domain" description="Laminin G-like 1" evidence="3">
    <location>
        <begin position="2390"/>
        <end position="2591"/>
    </location>
</feature>
<feature type="domain" description="Laminin G-like 2" evidence="3">
    <location>
        <begin position="2598"/>
        <end position="2760"/>
    </location>
</feature>
<feature type="domain" description="Laminin G-like 3" evidence="3">
    <location>
        <begin position="2767"/>
        <end position="2927"/>
    </location>
</feature>
<feature type="domain" description="Laminin G-like 4" evidence="3">
    <location>
        <begin position="2986"/>
        <end position="3150"/>
    </location>
</feature>
<feature type="domain" description="Laminin G-like 5" evidence="3">
    <location>
        <begin position="3157"/>
        <end position="3330"/>
    </location>
</feature>
<feature type="region of interest" description="Domain V">
    <location>
        <begin position="298"/>
        <end position="728"/>
    </location>
</feature>
<feature type="region of interest" description="Domain IV 1 (domain IV B)">
    <location>
        <begin position="796"/>
        <end position="1265"/>
    </location>
</feature>
<feature type="region of interest" description="Domain III B">
    <location>
        <begin position="1266"/>
        <end position="1465"/>
    </location>
</feature>
<feature type="region of interest" description="Domain III A">
    <location>
        <begin position="1654"/>
        <end position="1821"/>
    </location>
</feature>
<feature type="region of interest" description="Domain II and I">
    <location>
        <begin position="1822"/>
        <end position="2389"/>
    </location>
</feature>
<feature type="coiled-coil region" evidence="2">
    <location>
        <begin position="1852"/>
        <end position="1941"/>
    </location>
</feature>
<feature type="coiled-coil region" evidence="2">
    <location>
        <begin position="1987"/>
        <end position="2169"/>
    </location>
</feature>
<feature type="coiled-coil region" evidence="2">
    <location>
        <begin position="2322"/>
        <end position="2388"/>
    </location>
</feature>
<feature type="short sequence motif" description="Cell attachment site" evidence="2">
    <location>
        <begin position="2278"/>
        <end position="2280"/>
    </location>
</feature>
<feature type="glycosylation site" description="N-linked (GlcNAc...) asparagine" evidence="2">
    <location>
        <position position="142"/>
    </location>
</feature>
<feature type="glycosylation site" description="N-linked (GlcNAc...) asparagine" evidence="2">
    <location>
        <position position="242"/>
    </location>
</feature>
<feature type="glycosylation site" description="N-linked (GlcNAc...) asparagine" evidence="2">
    <location>
        <position position="2365"/>
    </location>
</feature>
<feature type="glycosylation site" description="N-linked (GlcNAc...) asparagine" evidence="2">
    <location>
        <position position="2502"/>
    </location>
</feature>
<feature type="glycosylation site" description="N-linked (GlcNAc...) asparagine" evidence="2">
    <location>
        <position position="2584"/>
    </location>
</feature>
<feature type="disulfide bond" evidence="1">
    <location>
        <begin position="299"/>
        <end position="308"/>
    </location>
</feature>
<feature type="disulfide bond" evidence="1">
    <location>
        <begin position="301"/>
        <end position="319"/>
    </location>
</feature>
<feature type="disulfide bond" evidence="1">
    <location>
        <begin position="321"/>
        <end position="330"/>
    </location>
</feature>
<feature type="disulfide bond" evidence="1">
    <location>
        <begin position="333"/>
        <end position="353"/>
    </location>
</feature>
<feature type="disulfide bond" evidence="1">
    <location>
        <begin position="356"/>
        <end position="365"/>
    </location>
</feature>
<feature type="disulfide bond" evidence="1">
    <location>
        <begin position="358"/>
        <end position="390"/>
    </location>
</feature>
<feature type="disulfide bond" evidence="1">
    <location>
        <begin position="393"/>
        <end position="402"/>
    </location>
</feature>
<feature type="disulfide bond" evidence="1">
    <location>
        <begin position="405"/>
        <end position="423"/>
    </location>
</feature>
<feature type="disulfide bond" evidence="1">
    <location>
        <begin position="426"/>
        <end position="436"/>
    </location>
</feature>
<feature type="disulfide bond" evidence="1">
    <location>
        <begin position="428"/>
        <end position="443"/>
    </location>
</feature>
<feature type="disulfide bond" evidence="1">
    <location>
        <begin position="445"/>
        <end position="454"/>
    </location>
</feature>
<feature type="disulfide bond" evidence="1">
    <location>
        <begin position="457"/>
        <end position="467"/>
    </location>
</feature>
<feature type="disulfide bond" evidence="1">
    <location>
        <begin position="491"/>
        <end position="503"/>
    </location>
</feature>
<feature type="disulfide bond" evidence="1">
    <location>
        <begin position="493"/>
        <end position="509"/>
    </location>
</feature>
<feature type="disulfide bond" evidence="1">
    <location>
        <begin position="511"/>
        <end position="520"/>
    </location>
</feature>
<feature type="disulfide bond" evidence="1">
    <location>
        <begin position="523"/>
        <end position="533"/>
    </location>
</feature>
<feature type="disulfide bond" evidence="1">
    <location>
        <begin position="536"/>
        <end position="548"/>
    </location>
</feature>
<feature type="disulfide bond" evidence="1">
    <location>
        <begin position="538"/>
        <end position="555"/>
    </location>
</feature>
<feature type="disulfide bond" evidence="1">
    <location>
        <begin position="557"/>
        <end position="566"/>
    </location>
</feature>
<feature type="disulfide bond" evidence="1">
    <location>
        <begin position="569"/>
        <end position="586"/>
    </location>
</feature>
<feature type="disulfide bond" evidence="1">
    <location>
        <begin position="601"/>
        <end position="610"/>
    </location>
</feature>
<feature type="disulfide bond" evidence="1">
    <location>
        <begin position="613"/>
        <end position="628"/>
    </location>
</feature>
<feature type="disulfide bond" evidence="1">
    <location>
        <begin position="631"/>
        <end position="645"/>
    </location>
</feature>
<feature type="disulfide bond" evidence="1">
    <location>
        <begin position="633"/>
        <end position="652"/>
    </location>
</feature>
<feature type="disulfide bond" evidence="1">
    <location>
        <begin position="654"/>
        <end position="663"/>
    </location>
</feature>
<feature type="disulfide bond" evidence="1">
    <location>
        <begin position="666"/>
        <end position="681"/>
    </location>
</feature>
<feature type="disulfide bond" evidence="1">
    <location>
        <begin position="684"/>
        <end position="696"/>
    </location>
</feature>
<feature type="disulfide bond" evidence="1">
    <location>
        <begin position="686"/>
        <end position="703"/>
    </location>
</feature>
<feature type="disulfide bond" evidence="1">
    <location>
        <begin position="705"/>
        <end position="714"/>
    </location>
</feature>
<feature type="disulfide bond" evidence="1">
    <location>
        <begin position="1266"/>
        <end position="1278"/>
    </location>
</feature>
<feature type="disulfide bond" evidence="1">
    <location>
        <begin position="1268"/>
        <end position="1285"/>
    </location>
</feature>
<feature type="disulfide bond" evidence="1">
    <location>
        <begin position="1287"/>
        <end position="1296"/>
    </location>
</feature>
<feature type="disulfide bond" evidence="1">
    <location>
        <begin position="1299"/>
        <end position="1309"/>
    </location>
</feature>
<feature type="disulfide bond" evidence="1">
    <location>
        <begin position="1312"/>
        <end position="1319"/>
    </location>
</feature>
<feature type="disulfide bond" evidence="1">
    <location>
        <begin position="1314"/>
        <end position="1326"/>
    </location>
</feature>
<feature type="disulfide bond" evidence="1">
    <location>
        <begin position="1328"/>
        <end position="1337"/>
    </location>
</feature>
<feature type="disulfide bond" evidence="1">
    <location>
        <begin position="1340"/>
        <end position="1353"/>
    </location>
</feature>
<feature type="disulfide bond" evidence="1">
    <location>
        <begin position="1356"/>
        <end position="1371"/>
    </location>
</feature>
<feature type="disulfide bond" evidence="1">
    <location>
        <begin position="1358"/>
        <end position="1378"/>
    </location>
</feature>
<feature type="disulfide bond" evidence="1">
    <location>
        <begin position="1380"/>
        <end position="1389"/>
    </location>
</feature>
<feature type="disulfide bond" evidence="1">
    <location>
        <begin position="1392"/>
        <end position="1402"/>
    </location>
</feature>
<feature type="disulfide bond" evidence="1">
    <location>
        <begin position="1405"/>
        <end position="1417"/>
    </location>
</feature>
<feature type="disulfide bond" evidence="1">
    <location>
        <begin position="1407"/>
        <end position="1424"/>
    </location>
</feature>
<feature type="disulfide bond" evidence="1">
    <location>
        <begin position="1426"/>
        <end position="1435"/>
    </location>
</feature>
<feature type="disulfide bond" evidence="1">
    <location>
        <begin position="1438"/>
        <end position="1453"/>
    </location>
</feature>
<feature type="disulfide bond" evidence="1">
    <location>
        <begin position="1687"/>
        <end position="1696"/>
    </location>
</feature>
<feature type="disulfide bond" evidence="1">
    <location>
        <begin position="1689"/>
        <end position="1703"/>
    </location>
</feature>
<feature type="disulfide bond" evidence="1">
    <location>
        <begin position="1706"/>
        <end position="1715"/>
    </location>
</feature>
<feature type="disulfide bond" evidence="1">
    <location>
        <begin position="1718"/>
        <end position="1731"/>
    </location>
</feature>
<feature type="disulfide bond" evidence="1">
    <location>
        <begin position="1734"/>
        <end position="1746"/>
    </location>
</feature>
<feature type="disulfide bond" evidence="1">
    <location>
        <begin position="1736"/>
        <end position="1755"/>
    </location>
</feature>
<feature type="disulfide bond" evidence="1">
    <location>
        <begin position="1757"/>
        <end position="1766"/>
    </location>
</feature>
<feature type="disulfide bond" evidence="1">
    <location>
        <begin position="1769"/>
        <end position="1784"/>
    </location>
</feature>
<feature type="disulfide bond" description="Interchain" evidence="18">
    <location>
        <position position="1822"/>
    </location>
</feature>
<feature type="disulfide bond" description="Interchain" evidence="18">
    <location>
        <position position="1825"/>
    </location>
</feature>
<feature type="disulfide bond" evidence="1">
    <location>
        <begin position="2561"/>
        <end position="2591"/>
    </location>
</feature>
<feature type="disulfide bond" evidence="1">
    <location>
        <begin position="2737"/>
        <end position="2760"/>
    </location>
</feature>
<feature type="disulfide bond" evidence="1">
    <location>
        <begin position="2895"/>
        <end position="2927"/>
    </location>
</feature>
<feature type="disulfide bond" evidence="1">
    <location>
        <begin position="3127"/>
        <end position="3150"/>
    </location>
</feature>
<feature type="disulfide bond" evidence="1">
    <location>
        <begin position="3302"/>
        <end position="3330"/>
    </location>
</feature>
<feature type="splice variant" id="VSP_035738" description="In isoform 1." evidence="17">
    <location>
        <begin position="1"/>
        <end position="1620"/>
    </location>
</feature>
<feature type="splice variant" id="VSP_047079" description="In isoform 4." evidence="16">
    <location>
        <begin position="1"/>
        <end position="1609"/>
    </location>
</feature>
<feature type="splice variant" id="VSP_047080" description="In isoform 4." evidence="16">
    <original>LSRLADVRIQGLYFTETQRLTLSEVGLEEASDTGSGRIALAVEICACPPAYAGDSC</original>
    <variation>MPPAVRRSACSMGWLWIFGAALGQCLGYSSQQQRVPFLQPPGQSQLQASYVEFRPS</variation>
    <location>
        <begin position="1610"/>
        <end position="1665"/>
    </location>
</feature>
<feature type="splice variant" id="VSP_035739" description="In isoform 1." evidence="17">
    <original>LYFTETQRLTLSEVGLEEASDTGSGRIALAVEICACPPAYAGDSC</original>
    <variation>MPPAVRRSACSMGWLWIFGAALGQCLGYSSQQQRVPFLQPPGQSQLQASYVEFRPS</variation>
    <location>
        <begin position="1621"/>
        <end position="1665"/>
    </location>
</feature>
<feature type="splice variant" id="VSP_043487" description="In isoform 3 and isoform 4." evidence="16">
    <original>ILLKQISGTDGEGNNVPSGDFSREWAEAQRMMRELRNRNFGKHLREAEADKRESQLL</original>
    <variation>M</variation>
    <location>
        <begin position="1946"/>
        <end position="2002"/>
    </location>
</feature>
<feature type="sequence variant" id="VAR_050078" description="In dbSNP:rs17187262.">
    <original>T</original>
    <variation>N</variation>
    <location>
        <position position="796"/>
    </location>
</feature>
<feature type="sequence variant" id="VAR_050079" description="In dbSNP:rs12457323.">
    <original>V</original>
    <variation>A</variation>
    <location>
        <position position="1206"/>
    </location>
</feature>
<feature type="sequence variant" id="VAR_050080" description="In dbSNP:rs17202961.">
    <original>P</original>
    <variation>T</variation>
    <location>
        <position position="1208"/>
    </location>
</feature>
<feature type="sequence variant" id="VAR_059444" description="In dbSNP:rs958631.">
    <original>F</original>
    <variation>L</variation>
    <location>
        <position position="1774"/>
    </location>
</feature>
<feature type="sequence variant" id="VAR_086401" description="In JEB2B." evidence="11 13">
    <location>
        <begin position="2270"/>
        <end position="3333"/>
    </location>
</feature>
<feature type="sequence variant" id="VAR_047374" description="In dbSNP:rs9952370.">
    <original>T</original>
    <variation>A</variation>
    <location>
        <position position="2702"/>
    </location>
</feature>
<feature type="sequence variant" id="VAR_047375" description="In dbSNP:rs1154232.">
    <original>N</original>
    <variation>K</variation>
    <location>
        <position position="2815"/>
    </location>
</feature>
<feature type="sequence variant" id="VAR_059445" description="In dbSNP:rs1154233." evidence="8 9 10 12 15">
    <original>G</original>
    <variation>S</variation>
    <location>
        <position position="2834"/>
    </location>
</feature>
<feature type="sequence conflict" description="In Ref. 5; CAA59429 and 6; CAA59325." evidence="18" ref="5 6">
    <original>G</original>
    <variation>A</variation>
    <location>
        <position position="1544"/>
    </location>
</feature>
<feature type="sequence conflict" description="In Ref. 5; CAA59428/CAA59429." evidence="18" ref="5">
    <original>ATG</original>
    <variation>GMC</variation>
    <location>
        <begin position="1743"/>
        <end position="1745"/>
    </location>
</feature>
<feature type="sequence conflict" description="In Ref. 5; CAA59428/CAA59429." evidence="18" ref="5">
    <original>M</original>
    <variation>K</variation>
    <location>
        <position position="2101"/>
    </location>
</feature>
<feature type="sequence conflict" description="In Ref. 5; CAA59428/CAA59429." evidence="18" ref="5">
    <original>R</original>
    <variation>L</variation>
    <location>
        <position position="2374"/>
    </location>
</feature>
<feature type="sequence conflict" description="In Ref. 5; CAA59428/CAA59429." evidence="18" ref="5">
    <original>E</original>
    <variation>Q</variation>
    <location>
        <position position="2589"/>
    </location>
</feature>
<feature type="sequence conflict" description="In Ref. 5; CAA59428/CAA59429." evidence="18" ref="5">
    <original>D</original>
    <variation>A</variation>
    <location>
        <position position="2672"/>
    </location>
</feature>
<feature type="sequence conflict" description="In Ref. 5; CAA59428/CAA59429." evidence="18" ref="5">
    <original>G</original>
    <variation>A</variation>
    <location>
        <position position="2804"/>
    </location>
</feature>